<name>BTKL_DROME</name>
<gene>
    <name evidence="13 19" type="primary">Btk</name>
    <name evidence="19" type="synonym">Btk29A</name>
    <name evidence="19" type="synonym">Src2</name>
    <name evidence="19" type="synonym">Src29A</name>
    <name evidence="16" type="synonym">Tec29</name>
    <name evidence="19" type="ORF">CG8049</name>
</gene>
<reference key="1">
    <citation type="journal article" date="1987" name="Mol. Cell. Biol.">
        <title>Primary sequence and developmental expression of a novel Drosophila melanogaster src gene.</title>
        <authorList>
            <person name="Gregory R.J."/>
            <person name="Kammermeyer K.L."/>
            <person name="Vincent W.S. III"/>
            <person name="Wadsworth S.G."/>
        </authorList>
    </citation>
    <scope>NUCLEOTIDE SEQUENCE [MRNA] (ISOFORM A)</scope>
    <scope>TISSUE SPECIFICITY</scope>
    <scope>DEVELOPMENTAL STAGE</scope>
</reference>
<reference key="2">
    <citation type="journal article" date="1999" name="Mol. Cell. Biol.">
        <title>The Drosophila Bruton's tyrosine kinase (Btk) homolog is required for adult survival and male genital formation.</title>
        <authorList>
            <person name="Baba K."/>
            <person name="Takeshita A."/>
            <person name="Majima K."/>
            <person name="Ueda R."/>
            <person name="Kondo S."/>
            <person name="Juni N."/>
            <person name="Yamamoto D."/>
        </authorList>
    </citation>
    <scope>NUCLEOTIDE SEQUENCE [MRNA] (ISOFORMS A AND B)</scope>
    <scope>FUNCTION</scope>
    <scope>TISSUE SPECIFICITY</scope>
    <scope>DEVELOPMENTAL STAGE</scope>
    <scope>DISRUPTION PHENOTYPE</scope>
    <source>
        <strain>Canton-S</strain>
        <strain>Oregon-R</strain>
        <tissue>Head</tissue>
    </source>
</reference>
<reference key="3">
    <citation type="journal article" date="2000" name="Science">
        <title>The genome sequence of Drosophila melanogaster.</title>
        <authorList>
            <person name="Adams M.D."/>
            <person name="Celniker S.E."/>
            <person name="Holt R.A."/>
            <person name="Evans C.A."/>
            <person name="Gocayne J.D."/>
            <person name="Amanatides P.G."/>
            <person name="Scherer S.E."/>
            <person name="Li P.W."/>
            <person name="Hoskins R.A."/>
            <person name="Galle R.F."/>
            <person name="George R.A."/>
            <person name="Lewis S.E."/>
            <person name="Richards S."/>
            <person name="Ashburner M."/>
            <person name="Henderson S.N."/>
            <person name="Sutton G.G."/>
            <person name="Wortman J.R."/>
            <person name="Yandell M.D."/>
            <person name="Zhang Q."/>
            <person name="Chen L.X."/>
            <person name="Brandon R.C."/>
            <person name="Rogers Y.-H.C."/>
            <person name="Blazej R.G."/>
            <person name="Champe M."/>
            <person name="Pfeiffer B.D."/>
            <person name="Wan K.H."/>
            <person name="Doyle C."/>
            <person name="Baxter E.G."/>
            <person name="Helt G."/>
            <person name="Nelson C.R."/>
            <person name="Miklos G.L.G."/>
            <person name="Abril J.F."/>
            <person name="Agbayani A."/>
            <person name="An H.-J."/>
            <person name="Andrews-Pfannkoch C."/>
            <person name="Baldwin D."/>
            <person name="Ballew R.M."/>
            <person name="Basu A."/>
            <person name="Baxendale J."/>
            <person name="Bayraktaroglu L."/>
            <person name="Beasley E.M."/>
            <person name="Beeson K.Y."/>
            <person name="Benos P.V."/>
            <person name="Berman B.P."/>
            <person name="Bhandari D."/>
            <person name="Bolshakov S."/>
            <person name="Borkova D."/>
            <person name="Botchan M.R."/>
            <person name="Bouck J."/>
            <person name="Brokstein P."/>
            <person name="Brottier P."/>
            <person name="Burtis K.C."/>
            <person name="Busam D.A."/>
            <person name="Butler H."/>
            <person name="Cadieu E."/>
            <person name="Center A."/>
            <person name="Chandra I."/>
            <person name="Cherry J.M."/>
            <person name="Cawley S."/>
            <person name="Dahlke C."/>
            <person name="Davenport L.B."/>
            <person name="Davies P."/>
            <person name="de Pablos B."/>
            <person name="Delcher A."/>
            <person name="Deng Z."/>
            <person name="Mays A.D."/>
            <person name="Dew I."/>
            <person name="Dietz S.M."/>
            <person name="Dodson K."/>
            <person name="Doup L.E."/>
            <person name="Downes M."/>
            <person name="Dugan-Rocha S."/>
            <person name="Dunkov B.C."/>
            <person name="Dunn P."/>
            <person name="Durbin K.J."/>
            <person name="Evangelista C.C."/>
            <person name="Ferraz C."/>
            <person name="Ferriera S."/>
            <person name="Fleischmann W."/>
            <person name="Fosler C."/>
            <person name="Gabrielian A.E."/>
            <person name="Garg N.S."/>
            <person name="Gelbart W.M."/>
            <person name="Glasser K."/>
            <person name="Glodek A."/>
            <person name="Gong F."/>
            <person name="Gorrell J.H."/>
            <person name="Gu Z."/>
            <person name="Guan P."/>
            <person name="Harris M."/>
            <person name="Harris N.L."/>
            <person name="Harvey D.A."/>
            <person name="Heiman T.J."/>
            <person name="Hernandez J.R."/>
            <person name="Houck J."/>
            <person name="Hostin D."/>
            <person name="Houston K.A."/>
            <person name="Howland T.J."/>
            <person name="Wei M.-H."/>
            <person name="Ibegwam C."/>
            <person name="Jalali M."/>
            <person name="Kalush F."/>
            <person name="Karpen G.H."/>
            <person name="Ke Z."/>
            <person name="Kennison J.A."/>
            <person name="Ketchum K.A."/>
            <person name="Kimmel B.E."/>
            <person name="Kodira C.D."/>
            <person name="Kraft C.L."/>
            <person name="Kravitz S."/>
            <person name="Kulp D."/>
            <person name="Lai Z."/>
            <person name="Lasko P."/>
            <person name="Lei Y."/>
            <person name="Levitsky A.A."/>
            <person name="Li J.H."/>
            <person name="Li Z."/>
            <person name="Liang Y."/>
            <person name="Lin X."/>
            <person name="Liu X."/>
            <person name="Mattei B."/>
            <person name="McIntosh T.C."/>
            <person name="McLeod M.P."/>
            <person name="McPherson D."/>
            <person name="Merkulov G."/>
            <person name="Milshina N.V."/>
            <person name="Mobarry C."/>
            <person name="Morris J."/>
            <person name="Moshrefi A."/>
            <person name="Mount S.M."/>
            <person name="Moy M."/>
            <person name="Murphy B."/>
            <person name="Murphy L."/>
            <person name="Muzny D.M."/>
            <person name="Nelson D.L."/>
            <person name="Nelson D.R."/>
            <person name="Nelson K.A."/>
            <person name="Nixon K."/>
            <person name="Nusskern D.R."/>
            <person name="Pacleb J.M."/>
            <person name="Palazzolo M."/>
            <person name="Pittman G.S."/>
            <person name="Pan S."/>
            <person name="Pollard J."/>
            <person name="Puri V."/>
            <person name="Reese M.G."/>
            <person name="Reinert K."/>
            <person name="Remington K."/>
            <person name="Saunders R.D.C."/>
            <person name="Scheeler F."/>
            <person name="Shen H."/>
            <person name="Shue B.C."/>
            <person name="Siden-Kiamos I."/>
            <person name="Simpson M."/>
            <person name="Skupski M.P."/>
            <person name="Smith T.J."/>
            <person name="Spier E."/>
            <person name="Spradling A.C."/>
            <person name="Stapleton M."/>
            <person name="Strong R."/>
            <person name="Sun E."/>
            <person name="Svirskas R."/>
            <person name="Tector C."/>
            <person name="Turner R."/>
            <person name="Venter E."/>
            <person name="Wang A.H."/>
            <person name="Wang X."/>
            <person name="Wang Z.-Y."/>
            <person name="Wassarman D.A."/>
            <person name="Weinstock G.M."/>
            <person name="Weissenbach J."/>
            <person name="Williams S.M."/>
            <person name="Woodage T."/>
            <person name="Worley K.C."/>
            <person name="Wu D."/>
            <person name="Yang S."/>
            <person name="Yao Q.A."/>
            <person name="Ye J."/>
            <person name="Yeh R.-F."/>
            <person name="Zaveri J.S."/>
            <person name="Zhan M."/>
            <person name="Zhang G."/>
            <person name="Zhao Q."/>
            <person name="Zheng L."/>
            <person name="Zheng X.H."/>
            <person name="Zhong F.N."/>
            <person name="Zhong W."/>
            <person name="Zhou X."/>
            <person name="Zhu S.C."/>
            <person name="Zhu X."/>
            <person name="Smith H.O."/>
            <person name="Gibbs R.A."/>
            <person name="Myers E.W."/>
            <person name="Rubin G.M."/>
            <person name="Venter J.C."/>
        </authorList>
    </citation>
    <scope>NUCLEOTIDE SEQUENCE [LARGE SCALE GENOMIC DNA]</scope>
    <source>
        <strain>Berkeley</strain>
    </source>
</reference>
<reference key="4">
    <citation type="journal article" date="2002" name="Genome Biol.">
        <title>Annotation of the Drosophila melanogaster euchromatic genome: a systematic review.</title>
        <authorList>
            <person name="Misra S."/>
            <person name="Crosby M.A."/>
            <person name="Mungall C.J."/>
            <person name="Matthews B.B."/>
            <person name="Campbell K.S."/>
            <person name="Hradecky P."/>
            <person name="Huang Y."/>
            <person name="Kaminker J.S."/>
            <person name="Millburn G.H."/>
            <person name="Prochnik S.E."/>
            <person name="Smith C.D."/>
            <person name="Tupy J.L."/>
            <person name="Whitfield E.J."/>
            <person name="Bayraktaroglu L."/>
            <person name="Berman B.P."/>
            <person name="Bettencourt B.R."/>
            <person name="Celniker S.E."/>
            <person name="de Grey A.D.N.J."/>
            <person name="Drysdale R.A."/>
            <person name="Harris N.L."/>
            <person name="Richter J."/>
            <person name="Russo S."/>
            <person name="Schroeder A.J."/>
            <person name="Shu S.Q."/>
            <person name="Stapleton M."/>
            <person name="Yamada C."/>
            <person name="Ashburner M."/>
            <person name="Gelbart W.M."/>
            <person name="Rubin G.M."/>
            <person name="Lewis S.E."/>
        </authorList>
    </citation>
    <scope>GENOME REANNOTATION</scope>
    <scope>ALTERNATIVE SPLICING</scope>
    <source>
        <strain>Berkeley</strain>
    </source>
</reference>
<reference key="5">
    <citation type="journal article" date="2002" name="Genome Biol.">
        <title>A Drosophila full-length cDNA resource.</title>
        <authorList>
            <person name="Stapleton M."/>
            <person name="Carlson J.W."/>
            <person name="Brokstein P."/>
            <person name="Yu C."/>
            <person name="Champe M."/>
            <person name="George R.A."/>
            <person name="Guarin H."/>
            <person name="Kronmiller B."/>
            <person name="Pacleb J.M."/>
            <person name="Park S."/>
            <person name="Wan K.H."/>
            <person name="Rubin G.M."/>
            <person name="Celniker S.E."/>
        </authorList>
    </citation>
    <scope>NUCLEOTIDE SEQUENCE [LARGE SCALE MRNA] (ISOFORMS A AND B)</scope>
    <source>
        <strain>Berkeley</strain>
        <tissue>Embryo</tissue>
    </source>
</reference>
<reference key="6">
    <citation type="submission" date="2004-01" db="EMBL/GenBank/DDBJ databases">
        <authorList>
            <person name="Stapleton M."/>
            <person name="Brokstein P."/>
            <person name="Hong L."/>
            <person name="Agbayani A."/>
            <person name="Carlson J.W."/>
            <person name="Champe M."/>
            <person name="Chavez C."/>
            <person name="Dorsett V."/>
            <person name="Dresnek D."/>
            <person name="Farfan D."/>
            <person name="Frise E."/>
            <person name="George R.A."/>
            <person name="Gonzalez M."/>
            <person name="Guarin H."/>
            <person name="Kronmiller B."/>
            <person name="Li P.W."/>
            <person name="Liao G."/>
            <person name="Miranda A."/>
            <person name="Mungall C.J."/>
            <person name="Nunoo J."/>
            <person name="Pacleb J.M."/>
            <person name="Paragas V."/>
            <person name="Park S."/>
            <person name="Patel S."/>
            <person name="Phouanenavong S."/>
            <person name="Wan K.H."/>
            <person name="Yu C."/>
            <person name="Lewis S.E."/>
            <person name="Rubin G.M."/>
            <person name="Celniker S.E."/>
        </authorList>
    </citation>
    <scope>NUCLEOTIDE SEQUENCE [LARGE SCALE MRNA] (ISOFORM A)</scope>
    <source>
        <strain>Berkeley</strain>
    </source>
</reference>
<reference key="7">
    <citation type="journal article" date="1998" name="Mol. Cell">
        <title>SRC64 regulates the localization of a Tec-family kinase required for Drosophila ring canal growth.</title>
        <authorList>
            <person name="Guarnieri D.J."/>
            <person name="Dodson G.S."/>
            <person name="Simon M.A."/>
        </authorList>
    </citation>
    <scope>NUCLEOTIDE SEQUENCE [MRNA] OF 199-786 (ISOFORM A)</scope>
    <source>
        <tissue>Eye-antennal disk</tissue>
    </source>
</reference>
<reference key="8">
    <citation type="journal article" date="1985" name="Nucleic Acids Res.">
        <title>Maternal inheritance of transcripts from three Drosophila src-related genes.</title>
        <authorList>
            <person name="Wadsworth S.C."/>
            <person name="Madhavan K."/>
            <person name="Bilodeau-Wentworth D."/>
        </authorList>
    </citation>
    <scope>NUCLEOTIDE SEQUENCE [GENOMIC DNA] OF 552-684</scope>
</reference>
<reference key="9">
    <citation type="journal article" date="1998" name="Development">
        <title>Src64 is required for ovarian ring canal morphogenesis during Drosophila oogenesis.</title>
        <authorList>
            <person name="Dodson G.S."/>
            <person name="Guarnieri D.J."/>
            <person name="Simon M.A."/>
        </authorList>
    </citation>
    <scope>FUNCTION</scope>
    <scope>TISSUE SPECIFICITY</scope>
</reference>
<reference key="10">
    <citation type="unpublished observations" date="1997-07">
        <authorList>
            <person name="Sjolander K."/>
        </authorList>
    </citation>
    <scope>SIMILARITY TO BTK SUBFAMILY</scope>
</reference>
<accession>P08630</accession>
<accession>A4V0F3</accession>
<accession>A4V0F4</accession>
<accession>O45032</accession>
<accession>O76132</accession>
<accession>O76133</accession>
<accession>P11361</accession>
<accession>Q6NNV0</accession>
<accession>Q8T0A0</accession>
<accession>Q9VLQ2</accession>
<accession>Q9VLQ3</accession>
<dbReference type="EC" id="2.7.10.2" evidence="2"/>
<dbReference type="EMBL" id="M16599">
    <property type="protein sequence ID" value="AAA28912.1"/>
    <property type="status" value="ALT_FRAME"/>
    <property type="molecule type" value="mRNA"/>
</dbReference>
<dbReference type="EMBL" id="AB009840">
    <property type="protein sequence ID" value="BAA24063.1"/>
    <property type="molecule type" value="mRNA"/>
</dbReference>
<dbReference type="EMBL" id="AB009841">
    <property type="protein sequence ID" value="BAA24064.1"/>
    <property type="molecule type" value="mRNA"/>
</dbReference>
<dbReference type="EMBL" id="AE014134">
    <property type="protein sequence ID" value="AAF52631.3"/>
    <property type="molecule type" value="Genomic_DNA"/>
</dbReference>
<dbReference type="EMBL" id="AE014134">
    <property type="protein sequence ID" value="AAF52632.2"/>
    <property type="molecule type" value="Genomic_DNA"/>
</dbReference>
<dbReference type="EMBL" id="AE014134">
    <property type="protein sequence ID" value="AAN11161.1"/>
    <property type="molecule type" value="Genomic_DNA"/>
</dbReference>
<dbReference type="EMBL" id="AE014134">
    <property type="protein sequence ID" value="AAN11162.1"/>
    <property type="molecule type" value="Genomic_DNA"/>
</dbReference>
<dbReference type="EMBL" id="AE014134">
    <property type="protein sequence ID" value="ABV53648.1"/>
    <property type="molecule type" value="Genomic_DNA"/>
</dbReference>
<dbReference type="EMBL" id="AE014134">
    <property type="protein sequence ID" value="ABV53649.1"/>
    <property type="molecule type" value="Genomic_DNA"/>
</dbReference>
<dbReference type="EMBL" id="AY069457">
    <property type="protein sequence ID" value="AAL39602.1"/>
    <property type="molecule type" value="mRNA"/>
</dbReference>
<dbReference type="EMBL" id="AY128441">
    <property type="protein sequence ID" value="AAM75034.1"/>
    <property type="molecule type" value="mRNA"/>
</dbReference>
<dbReference type="EMBL" id="BT011183">
    <property type="protein sequence ID" value="AAR88544.1"/>
    <property type="molecule type" value="mRNA"/>
</dbReference>
<dbReference type="EMBL" id="AF044337">
    <property type="protein sequence ID" value="AAB99858.1"/>
    <property type="molecule type" value="mRNA"/>
</dbReference>
<dbReference type="EMBL" id="X02305">
    <property type="protein sequence ID" value="CAA26170.1"/>
    <property type="molecule type" value="Genomic_DNA"/>
</dbReference>
<dbReference type="PIR" id="A23051">
    <property type="entry name" value="A23051"/>
</dbReference>
<dbReference type="PIR" id="A27807">
    <property type="entry name" value="TVFFDS"/>
</dbReference>
<dbReference type="RefSeq" id="NP_001097120.1">
    <molecule id="P08630-2"/>
    <property type="nucleotide sequence ID" value="NM_001103650.2"/>
</dbReference>
<dbReference type="RefSeq" id="NP_001097121.1">
    <molecule id="P08630-1"/>
    <property type="nucleotide sequence ID" value="NM_001103651.3"/>
</dbReference>
<dbReference type="RefSeq" id="NP_476745.1">
    <molecule id="P08630-1"/>
    <property type="nucleotide sequence ID" value="NM_057397.6"/>
</dbReference>
<dbReference type="RefSeq" id="NP_476746.1">
    <molecule id="P08630-2"/>
    <property type="nucleotide sequence ID" value="NM_057398.4"/>
</dbReference>
<dbReference type="RefSeq" id="NP_723369.1">
    <molecule id="P08630-1"/>
    <property type="nucleotide sequence ID" value="NM_164804.2"/>
</dbReference>
<dbReference type="RefSeq" id="NP_723370.1">
    <molecule id="P08630-2"/>
    <property type="nucleotide sequence ID" value="NM_164805.2"/>
</dbReference>
<dbReference type="SMR" id="P08630"/>
<dbReference type="BioGRID" id="60259">
    <property type="interactions" value="26"/>
</dbReference>
<dbReference type="DIP" id="DIP-23748N"/>
<dbReference type="FunCoup" id="P08630">
    <property type="interactions" value="268"/>
</dbReference>
<dbReference type="IntAct" id="P08630">
    <property type="interactions" value="1"/>
</dbReference>
<dbReference type="STRING" id="7227.FBpp0111749"/>
<dbReference type="GlyGen" id="P08630">
    <property type="glycosylation" value="2 sites"/>
</dbReference>
<dbReference type="iPTMnet" id="P08630"/>
<dbReference type="PaxDb" id="7227-FBpp0079237"/>
<dbReference type="DNASU" id="34132"/>
<dbReference type="EnsemblMetazoa" id="FBtr0079615">
    <molecule id="P08630-2"/>
    <property type="protein sequence ID" value="FBpp0079235"/>
    <property type="gene ID" value="FBgn0003502"/>
</dbReference>
<dbReference type="EnsemblMetazoa" id="FBtr0079616">
    <molecule id="P08630-1"/>
    <property type="protein sequence ID" value="FBpp0079236"/>
    <property type="gene ID" value="FBgn0003502"/>
</dbReference>
<dbReference type="EnsemblMetazoa" id="FBtr0079617">
    <molecule id="P08630-1"/>
    <property type="protein sequence ID" value="FBpp0079237"/>
    <property type="gene ID" value="FBgn0003502"/>
</dbReference>
<dbReference type="EnsemblMetazoa" id="FBtr0079618">
    <molecule id="P08630-2"/>
    <property type="protein sequence ID" value="FBpp0079238"/>
    <property type="gene ID" value="FBgn0003502"/>
</dbReference>
<dbReference type="EnsemblMetazoa" id="FBtr0112835">
    <molecule id="P08630-2"/>
    <property type="protein sequence ID" value="FBpp0111748"/>
    <property type="gene ID" value="FBgn0003502"/>
</dbReference>
<dbReference type="EnsemblMetazoa" id="FBtr0112836">
    <molecule id="P08630-1"/>
    <property type="protein sequence ID" value="FBpp0111749"/>
    <property type="gene ID" value="FBgn0003502"/>
</dbReference>
<dbReference type="GeneID" id="34132"/>
<dbReference type="KEGG" id="dme:Dmel_CG8049"/>
<dbReference type="AGR" id="FB:FBgn0003502"/>
<dbReference type="CTD" id="695"/>
<dbReference type="FlyBase" id="FBgn0003502">
    <property type="gene designation" value="Btk"/>
</dbReference>
<dbReference type="VEuPathDB" id="VectorBase:FBgn0003502"/>
<dbReference type="eggNOG" id="KOG0197">
    <property type="taxonomic scope" value="Eukaryota"/>
</dbReference>
<dbReference type="GeneTree" id="ENSGT00940000170881"/>
<dbReference type="InParanoid" id="P08630"/>
<dbReference type="OMA" id="YNPFGDI"/>
<dbReference type="OrthoDB" id="28230at2759"/>
<dbReference type="PhylomeDB" id="P08630"/>
<dbReference type="Reactome" id="R-DME-111465">
    <property type="pathway name" value="Apoptotic cleavage of cellular proteins"/>
</dbReference>
<dbReference type="Reactome" id="R-DME-1660499">
    <property type="pathway name" value="Synthesis of PIPs at the plasma membrane"/>
</dbReference>
<dbReference type="Reactome" id="R-DME-202433">
    <property type="pathway name" value="Generation of second messenger molecules"/>
</dbReference>
<dbReference type="Reactome" id="R-DME-2424491">
    <property type="pathway name" value="DAP12 signaling"/>
</dbReference>
<dbReference type="Reactome" id="R-DME-2871809">
    <property type="pathway name" value="FCERI mediated Ca+2 mobilization"/>
</dbReference>
<dbReference type="Reactome" id="R-DME-416476">
    <property type="pathway name" value="G alpha (q) signalling events"/>
</dbReference>
<dbReference type="Reactome" id="R-DME-416482">
    <property type="pathway name" value="G alpha (12/13) signalling events"/>
</dbReference>
<dbReference type="Reactome" id="R-DME-512988">
    <property type="pathway name" value="Interleukin-3, Interleukin-5 and GM-CSF signaling"/>
</dbReference>
<dbReference type="Reactome" id="R-DME-8964315">
    <property type="pathway name" value="G beta:gamma signalling through BTK"/>
</dbReference>
<dbReference type="SignaLink" id="P08630"/>
<dbReference type="BioGRID-ORCS" id="34132">
    <property type="hits" value="0 hits in 3 CRISPR screens"/>
</dbReference>
<dbReference type="ChiTaRS" id="Btk29A">
    <property type="organism name" value="fly"/>
</dbReference>
<dbReference type="GenomeRNAi" id="34132"/>
<dbReference type="PRO" id="PR:P08630"/>
<dbReference type="Proteomes" id="UP000000803">
    <property type="component" value="Chromosome 2L"/>
</dbReference>
<dbReference type="Bgee" id="FBgn0003502">
    <property type="expression patterns" value="Expressed in hemocyte (sensu Nematoda and Protostomia) in insect leg and 282 other cell types or tissues"/>
</dbReference>
<dbReference type="ExpressionAtlas" id="P08630">
    <property type="expression patterns" value="baseline and differential"/>
</dbReference>
<dbReference type="GO" id="GO:0045177">
    <property type="term" value="C:apical part of cell"/>
    <property type="evidence" value="ECO:0000314"/>
    <property type="project" value="FlyBase"/>
</dbReference>
<dbReference type="GO" id="GO:0071944">
    <property type="term" value="C:cell periphery"/>
    <property type="evidence" value="ECO:0000314"/>
    <property type="project" value="FlyBase"/>
</dbReference>
<dbReference type="GO" id="GO:0005737">
    <property type="term" value="C:cytoplasm"/>
    <property type="evidence" value="ECO:0000314"/>
    <property type="project" value="FlyBase"/>
</dbReference>
<dbReference type="GO" id="GO:0045172">
    <property type="term" value="C:germline ring canal"/>
    <property type="evidence" value="ECO:0000314"/>
    <property type="project" value="UniProtKB"/>
</dbReference>
<dbReference type="GO" id="GO:0005886">
    <property type="term" value="C:plasma membrane"/>
    <property type="evidence" value="ECO:0000314"/>
    <property type="project" value="FlyBase"/>
</dbReference>
<dbReference type="GO" id="GO:0005524">
    <property type="term" value="F:ATP binding"/>
    <property type="evidence" value="ECO:0007669"/>
    <property type="project" value="UniProtKB-KW"/>
</dbReference>
<dbReference type="GO" id="GO:0004715">
    <property type="term" value="F:non-membrane spanning protein tyrosine kinase activity"/>
    <property type="evidence" value="ECO:0000318"/>
    <property type="project" value="GO_Central"/>
</dbReference>
<dbReference type="GO" id="GO:0004713">
    <property type="term" value="F:protein tyrosine kinase activity"/>
    <property type="evidence" value="ECO:0000314"/>
    <property type="project" value="FlyBase"/>
</dbReference>
<dbReference type="GO" id="GO:0008270">
    <property type="term" value="F:zinc ion binding"/>
    <property type="evidence" value="ECO:0007669"/>
    <property type="project" value="UniProtKB-KW"/>
</dbReference>
<dbReference type="GO" id="GO:0030036">
    <property type="term" value="P:actin cytoskeleton organization"/>
    <property type="evidence" value="ECO:0000315"/>
    <property type="project" value="FlyBase"/>
</dbReference>
<dbReference type="GO" id="GO:0007349">
    <property type="term" value="P:cellularization"/>
    <property type="evidence" value="ECO:0000315"/>
    <property type="project" value="FlyBase"/>
</dbReference>
<dbReference type="GO" id="GO:0007619">
    <property type="term" value="P:courtship behavior"/>
    <property type="evidence" value="ECO:0000303"/>
    <property type="project" value="FlyBase"/>
</dbReference>
<dbReference type="GO" id="GO:0008340">
    <property type="term" value="P:determination of adult lifespan"/>
    <property type="evidence" value="ECO:0000315"/>
    <property type="project" value="UniProtKB"/>
</dbReference>
<dbReference type="GO" id="GO:0042023">
    <property type="term" value="P:DNA endoreduplication"/>
    <property type="evidence" value="ECO:0000315"/>
    <property type="project" value="FlyBase"/>
</dbReference>
<dbReference type="GO" id="GO:0007391">
    <property type="term" value="P:dorsal closure"/>
    <property type="evidence" value="ECO:0000304"/>
    <property type="project" value="FlyBase"/>
</dbReference>
<dbReference type="GO" id="GO:0007301">
    <property type="term" value="P:female germline ring canal formation"/>
    <property type="evidence" value="ECO:0000314"/>
    <property type="project" value="UniProtKB"/>
</dbReference>
<dbReference type="GO" id="GO:0008258">
    <property type="term" value="P:head involution"/>
    <property type="evidence" value="ECO:0000315"/>
    <property type="project" value="FlyBase"/>
</dbReference>
<dbReference type="GO" id="GO:0007485">
    <property type="term" value="P:imaginal disc-derived male genitalia development"/>
    <property type="evidence" value="ECO:0000315"/>
    <property type="project" value="UniProtKB"/>
</dbReference>
<dbReference type="GO" id="GO:0007254">
    <property type="term" value="P:JNK cascade"/>
    <property type="evidence" value="ECO:0000304"/>
    <property type="project" value="FlyBase"/>
</dbReference>
<dbReference type="GO" id="GO:0030717">
    <property type="term" value="P:oocyte karyosome formation"/>
    <property type="evidence" value="ECO:0000315"/>
    <property type="project" value="FlyBase"/>
</dbReference>
<dbReference type="GO" id="GO:0048477">
    <property type="term" value="P:oogenesis"/>
    <property type="evidence" value="ECO:0000315"/>
    <property type="project" value="FlyBase"/>
</dbReference>
<dbReference type="GO" id="GO:0007424">
    <property type="term" value="P:open tracheal system development"/>
    <property type="evidence" value="ECO:0000315"/>
    <property type="project" value="FlyBase"/>
</dbReference>
<dbReference type="GO" id="GO:0030723">
    <property type="term" value="P:ovarian fusome organization"/>
    <property type="evidence" value="ECO:0000315"/>
    <property type="project" value="FlyBase"/>
</dbReference>
<dbReference type="GO" id="GO:0007300">
    <property type="term" value="P:ovarian nurse cell to oocyte transport"/>
    <property type="evidence" value="ECO:0000315"/>
    <property type="project" value="FlyBase"/>
</dbReference>
<dbReference type="GO" id="GO:0030833">
    <property type="term" value="P:regulation of actin filament polymerization"/>
    <property type="evidence" value="ECO:0000315"/>
    <property type="project" value="FlyBase"/>
</dbReference>
<dbReference type="GO" id="GO:0007435">
    <property type="term" value="P:salivary gland morphogenesis"/>
    <property type="evidence" value="ECO:0000315"/>
    <property type="project" value="FlyBase"/>
</dbReference>
<dbReference type="GO" id="GO:0046960">
    <property type="term" value="P:sensitization"/>
    <property type="evidence" value="ECO:0000315"/>
    <property type="project" value="FlyBase"/>
</dbReference>
<dbReference type="GO" id="GO:0035277">
    <property type="term" value="P:spiracle morphogenesis, open tracheal system"/>
    <property type="evidence" value="ECO:0000315"/>
    <property type="project" value="FlyBase"/>
</dbReference>
<dbReference type="CDD" id="cd01238">
    <property type="entry name" value="PH_Btk"/>
    <property type="match status" value="1"/>
</dbReference>
<dbReference type="CDD" id="cd05059">
    <property type="entry name" value="PTKc_Tec_like"/>
    <property type="match status" value="1"/>
</dbReference>
<dbReference type="CDD" id="cd09934">
    <property type="entry name" value="SH2_Tec_family"/>
    <property type="match status" value="1"/>
</dbReference>
<dbReference type="CDD" id="cd11768">
    <property type="entry name" value="SH3_Tec_like"/>
    <property type="match status" value="1"/>
</dbReference>
<dbReference type="FunFam" id="1.10.510.10:FF:000052">
    <property type="entry name" value="Tyrosine-protein kinase"/>
    <property type="match status" value="1"/>
</dbReference>
<dbReference type="FunFam" id="2.30.30.40:FF:000190">
    <property type="entry name" value="Tyrosine-protein kinase"/>
    <property type="match status" value="1"/>
</dbReference>
<dbReference type="FunFam" id="3.30.200.20:FF:000053">
    <property type="entry name" value="Tyrosine-protein kinase"/>
    <property type="match status" value="1"/>
</dbReference>
<dbReference type="FunFam" id="3.30.505.10:FF:000045">
    <property type="entry name" value="Tyrosine-protein kinase"/>
    <property type="match status" value="1"/>
</dbReference>
<dbReference type="Gene3D" id="2.30.29.30">
    <property type="entry name" value="Pleckstrin-homology domain (PH domain)/Phosphotyrosine-binding domain (PTB)"/>
    <property type="match status" value="1"/>
</dbReference>
<dbReference type="Gene3D" id="3.30.505.10">
    <property type="entry name" value="SH2 domain"/>
    <property type="match status" value="1"/>
</dbReference>
<dbReference type="Gene3D" id="2.30.30.40">
    <property type="entry name" value="SH3 Domains"/>
    <property type="match status" value="1"/>
</dbReference>
<dbReference type="Gene3D" id="1.10.510.10">
    <property type="entry name" value="Transferase(Phosphotransferase) domain 1"/>
    <property type="match status" value="1"/>
</dbReference>
<dbReference type="InterPro" id="IPR011009">
    <property type="entry name" value="Kinase-like_dom_sf"/>
</dbReference>
<dbReference type="InterPro" id="IPR050198">
    <property type="entry name" value="Non-receptor_tyrosine_kinases"/>
</dbReference>
<dbReference type="InterPro" id="IPR011993">
    <property type="entry name" value="PH-like_dom_sf"/>
</dbReference>
<dbReference type="InterPro" id="IPR001849">
    <property type="entry name" value="PH_domain"/>
</dbReference>
<dbReference type="InterPro" id="IPR000719">
    <property type="entry name" value="Prot_kinase_dom"/>
</dbReference>
<dbReference type="InterPro" id="IPR017441">
    <property type="entry name" value="Protein_kinase_ATP_BS"/>
</dbReference>
<dbReference type="InterPro" id="IPR001245">
    <property type="entry name" value="Ser-Thr/Tyr_kinase_cat_dom"/>
</dbReference>
<dbReference type="InterPro" id="IPR000980">
    <property type="entry name" value="SH2"/>
</dbReference>
<dbReference type="InterPro" id="IPR036860">
    <property type="entry name" value="SH2_dom_sf"/>
</dbReference>
<dbReference type="InterPro" id="IPR036028">
    <property type="entry name" value="SH3-like_dom_sf"/>
</dbReference>
<dbReference type="InterPro" id="IPR001452">
    <property type="entry name" value="SH3_domain"/>
</dbReference>
<dbReference type="InterPro" id="IPR008266">
    <property type="entry name" value="Tyr_kinase_AS"/>
</dbReference>
<dbReference type="InterPro" id="IPR020635">
    <property type="entry name" value="Tyr_kinase_cat_dom"/>
</dbReference>
<dbReference type="InterPro" id="IPR001562">
    <property type="entry name" value="Znf_Btk_motif"/>
</dbReference>
<dbReference type="PANTHER" id="PTHR24418">
    <property type="entry name" value="TYROSINE-PROTEIN KINASE"/>
    <property type="match status" value="1"/>
</dbReference>
<dbReference type="Pfam" id="PF00779">
    <property type="entry name" value="BTK"/>
    <property type="match status" value="1"/>
</dbReference>
<dbReference type="Pfam" id="PF00169">
    <property type="entry name" value="PH"/>
    <property type="match status" value="1"/>
</dbReference>
<dbReference type="Pfam" id="PF07714">
    <property type="entry name" value="PK_Tyr_Ser-Thr"/>
    <property type="match status" value="1"/>
</dbReference>
<dbReference type="Pfam" id="PF00017">
    <property type="entry name" value="SH2"/>
    <property type="match status" value="1"/>
</dbReference>
<dbReference type="Pfam" id="PF00018">
    <property type="entry name" value="SH3_1"/>
    <property type="match status" value="1"/>
</dbReference>
<dbReference type="PRINTS" id="PR00401">
    <property type="entry name" value="SH2DOMAIN"/>
</dbReference>
<dbReference type="PRINTS" id="PR00109">
    <property type="entry name" value="TYRKINASE"/>
</dbReference>
<dbReference type="SMART" id="SM00233">
    <property type="entry name" value="PH"/>
    <property type="match status" value="1"/>
</dbReference>
<dbReference type="SMART" id="SM00252">
    <property type="entry name" value="SH2"/>
    <property type="match status" value="1"/>
</dbReference>
<dbReference type="SMART" id="SM00326">
    <property type="entry name" value="SH3"/>
    <property type="match status" value="1"/>
</dbReference>
<dbReference type="SMART" id="SM00219">
    <property type="entry name" value="TyrKc"/>
    <property type="match status" value="1"/>
</dbReference>
<dbReference type="SUPFAM" id="SSF50729">
    <property type="entry name" value="PH domain-like"/>
    <property type="match status" value="1"/>
</dbReference>
<dbReference type="SUPFAM" id="SSF56112">
    <property type="entry name" value="Protein kinase-like (PK-like)"/>
    <property type="match status" value="1"/>
</dbReference>
<dbReference type="SUPFAM" id="SSF55550">
    <property type="entry name" value="SH2 domain"/>
    <property type="match status" value="1"/>
</dbReference>
<dbReference type="SUPFAM" id="SSF50044">
    <property type="entry name" value="SH3-domain"/>
    <property type="match status" value="1"/>
</dbReference>
<dbReference type="PROSITE" id="PS50003">
    <property type="entry name" value="PH_DOMAIN"/>
    <property type="match status" value="1"/>
</dbReference>
<dbReference type="PROSITE" id="PS00107">
    <property type="entry name" value="PROTEIN_KINASE_ATP"/>
    <property type="match status" value="1"/>
</dbReference>
<dbReference type="PROSITE" id="PS50011">
    <property type="entry name" value="PROTEIN_KINASE_DOM"/>
    <property type="match status" value="1"/>
</dbReference>
<dbReference type="PROSITE" id="PS00109">
    <property type="entry name" value="PROTEIN_KINASE_TYR"/>
    <property type="match status" value="1"/>
</dbReference>
<dbReference type="PROSITE" id="PS50001">
    <property type="entry name" value="SH2"/>
    <property type="match status" value="1"/>
</dbReference>
<dbReference type="PROSITE" id="PS50002">
    <property type="entry name" value="SH3"/>
    <property type="match status" value="1"/>
</dbReference>
<dbReference type="PROSITE" id="PS51113">
    <property type="entry name" value="ZF_BTK"/>
    <property type="match status" value="1"/>
</dbReference>
<sequence length="786" mass="87392">MMGTKHRNSHVNGSIKSSSSLRSSSKSFQAKMDLMSERLYDVVKSGSMVKRAQNKKRFTPVNYKHRWFELTKRTFSYFDVENVERRRERGRIHLKGVRLVEEATVSGEGGDPFAPDGYPFQVGYCEISASANSHQLENGNGGGSGVGIEGQQSGRAVPQYTLYVIANSEKERSEWIRAIRQVCEDSNTPKSYRYHPGLWSGKKWSCCKGLSRTTFGCRAAAHWREANNNPSNGSSPAQNSTRSISPNSSTTNSQFSLQHNSSGSLGGGVGGGLGGGGSLGLGGGGGGGGSCTPTSLQPQSSLTTFKQSPTLLNGNGTLLDANMPGGIPTPGTPNSKAKDNSHFVKLVVALYPFKAIEGGDLSLEKNAEYEVIDDSQEHWWKVKDALGNVGYIPSNYVKPKALLGLERYEWYVGDMSRQRAESLLKQGDKEGCFVVRKSSTKGLYTLSLHTKVPQSHVKHYHIKQNARCEYYLSEKHCCETIPDLINYHRHNSGGLACRLKSSPCDRPVPPTAGLSHDKWEIHPMELMLMEELGSGQFGVVRRGKWRGSIDTAVKMMKEGTMSEDDFIEEAKVMTKLQHPNLVQLYGVCSKHRPIYIVTEYMKHGSLLNYLRRHEKTLIGNMGLLLDMCIQVSKGMTYLERHNYIHRDLAARNCLVGSENVVKVADFGLARYVLDDQYTSSGGTKFPIKWAPPEVLNYTRFSSKSDVWAYGVLMWEIFTCGKMPYGRLKNTEVVERVQRGIILEKPKSCAKEIYDVMKLCWSHGPEERPAFRVLMDQLALVAQTLTD</sequence>
<comment type="function">
    <text evidence="10 12">Required for proper ring canal development. Also required for the development of male genitalia and for adult survival.</text>
</comment>
<comment type="catalytic activity">
    <reaction evidence="2">
        <text>L-tyrosyl-[protein] + ATP = O-phospho-L-tyrosyl-[protein] + ADP + H(+)</text>
        <dbReference type="Rhea" id="RHEA:10596"/>
        <dbReference type="Rhea" id="RHEA-COMP:10136"/>
        <dbReference type="Rhea" id="RHEA-COMP:20101"/>
        <dbReference type="ChEBI" id="CHEBI:15378"/>
        <dbReference type="ChEBI" id="CHEBI:30616"/>
        <dbReference type="ChEBI" id="CHEBI:46858"/>
        <dbReference type="ChEBI" id="CHEBI:61978"/>
        <dbReference type="ChEBI" id="CHEBI:456216"/>
        <dbReference type="EC" id="2.7.10.2"/>
    </reaction>
</comment>
<comment type="cofactor">
    <cofactor evidence="2">
        <name>Zn(2+)</name>
        <dbReference type="ChEBI" id="CHEBI:29105"/>
    </cofactor>
    <text evidence="2">Binds 1 zinc ion per subunit.</text>
</comment>
<comment type="alternative products">
    <event type="alternative splicing"/>
    <isoform>
        <id>P08630-1</id>
        <name>B</name>
        <name>D</name>
        <name>E</name>
        <name>Type 2</name>
        <sequence type="displayed"/>
    </isoform>
    <isoform>
        <id>P08630-2</id>
        <name>A</name>
        <name>C</name>
        <name>F</name>
        <name>Type 1</name>
        <sequence type="described" ref="VSP_004964 VSP_004965"/>
    </isoform>
</comment>
<comment type="tissue specificity">
    <text evidence="10 11 12">Ring canals in the egg chambers and imaginal disks of third-instar larvae.</text>
</comment>
<comment type="developmental stage">
    <text evidence="10 11">Expressed both maternally and zygotically. Predominantly in early to middle embryogenesis, in larvae and adult females.</text>
</comment>
<comment type="disruption phenotype">
    <text evidence="10">Flies exhibit shortened copulatory duration (due to incomplete fusion of the left and right halves of the apodeme that holds the penis during copulation) and reduced adult-stage life span.</text>
</comment>
<comment type="similarity">
    <text evidence="18">Belongs to the protein kinase superfamily. Tyr protein kinase family. TEC subfamily.</text>
</comment>
<comment type="sequence caution" evidence="18">
    <conflict type="frameshift">
        <sequence resource="EMBL-CDS" id="AAA28912"/>
    </conflict>
</comment>
<organism>
    <name type="scientific">Drosophila melanogaster</name>
    <name type="common">Fruit fly</name>
    <dbReference type="NCBI Taxonomy" id="7227"/>
    <lineage>
        <taxon>Eukaryota</taxon>
        <taxon>Metazoa</taxon>
        <taxon>Ecdysozoa</taxon>
        <taxon>Arthropoda</taxon>
        <taxon>Hexapoda</taxon>
        <taxon>Insecta</taxon>
        <taxon>Pterygota</taxon>
        <taxon>Neoptera</taxon>
        <taxon>Endopterygota</taxon>
        <taxon>Diptera</taxon>
        <taxon>Brachycera</taxon>
        <taxon>Muscomorpha</taxon>
        <taxon>Ephydroidea</taxon>
        <taxon>Drosophilidae</taxon>
        <taxon>Drosophila</taxon>
        <taxon>Sophophora</taxon>
    </lineage>
</organism>
<protein>
    <recommendedName>
        <fullName evidence="13">Tyrosine-protein kinase Btk</fullName>
        <ecNumber evidence="2">2.7.10.2</ecNumber>
    </recommendedName>
    <alternativeName>
        <fullName evidence="15">Dsrc28C</fullName>
    </alternativeName>
    <alternativeName>
        <fullName evidence="19">Dsrc29a</fullName>
    </alternativeName>
</protein>
<feature type="chain" id="PRO_0000088068" description="Tyrosine-protein kinase Btk">
    <location>
        <begin position="1"/>
        <end position="786"/>
    </location>
</feature>
<feature type="domain" description="PH" evidence="3">
    <location>
        <begin position="41"/>
        <end position="184"/>
    </location>
</feature>
<feature type="domain" description="SH3" evidence="6">
    <location>
        <begin position="342"/>
        <end position="402"/>
    </location>
</feature>
<feature type="domain" description="SH2" evidence="5">
    <location>
        <begin position="410"/>
        <end position="503"/>
    </location>
</feature>
<feature type="domain" description="Protein kinase" evidence="4">
    <location>
        <begin position="526"/>
        <end position="779"/>
    </location>
</feature>
<feature type="zinc finger region" description="Btk-type" evidence="7">
    <location>
        <begin position="187"/>
        <end position="223"/>
    </location>
</feature>
<feature type="region of interest" description="Disordered" evidence="9">
    <location>
        <begin position="1"/>
        <end position="23"/>
    </location>
</feature>
<feature type="region of interest" description="Disordered" evidence="9">
    <location>
        <begin position="226"/>
        <end position="301"/>
    </location>
</feature>
<feature type="compositionally biased region" description="Low complexity" evidence="9">
    <location>
        <begin position="14"/>
        <end position="23"/>
    </location>
</feature>
<feature type="compositionally biased region" description="Low complexity" evidence="9">
    <location>
        <begin position="226"/>
        <end position="240"/>
    </location>
</feature>
<feature type="compositionally biased region" description="Polar residues" evidence="9">
    <location>
        <begin position="241"/>
        <end position="260"/>
    </location>
</feature>
<feature type="compositionally biased region" description="Gly residues" evidence="9">
    <location>
        <begin position="264"/>
        <end position="290"/>
    </location>
</feature>
<feature type="compositionally biased region" description="Polar residues" evidence="9">
    <location>
        <begin position="291"/>
        <end position="301"/>
    </location>
</feature>
<feature type="active site" description="Proton acceptor" evidence="4 8">
    <location>
        <position position="647"/>
    </location>
</feature>
<feature type="binding site" evidence="7">
    <location>
        <position position="195"/>
    </location>
    <ligand>
        <name>Zn(2+)</name>
        <dbReference type="ChEBI" id="CHEBI:29105"/>
    </ligand>
</feature>
<feature type="binding site" evidence="7">
    <location>
        <position position="206"/>
    </location>
    <ligand>
        <name>Zn(2+)</name>
        <dbReference type="ChEBI" id="CHEBI:29105"/>
    </ligand>
</feature>
<feature type="binding site" evidence="7">
    <location>
        <position position="207"/>
    </location>
    <ligand>
        <name>Zn(2+)</name>
        <dbReference type="ChEBI" id="CHEBI:29105"/>
    </ligand>
</feature>
<feature type="binding site" evidence="7">
    <location>
        <position position="217"/>
    </location>
    <ligand>
        <name>Zn(2+)</name>
        <dbReference type="ChEBI" id="CHEBI:29105"/>
    </ligand>
</feature>
<feature type="binding site" evidence="4">
    <location>
        <begin position="532"/>
        <end position="540"/>
    </location>
    <ligand>
        <name>ATP</name>
        <dbReference type="ChEBI" id="CHEBI:30616"/>
    </ligand>
</feature>
<feature type="binding site" evidence="4">
    <location>
        <position position="554"/>
    </location>
    <ligand>
        <name>ATP</name>
        <dbReference type="ChEBI" id="CHEBI:30616"/>
    </ligand>
</feature>
<feature type="modified residue" description="Phosphotyrosine; by autocatalysis" evidence="1">
    <location>
        <position position="677"/>
    </location>
</feature>
<feature type="splice variant" id="VSP_004964" description="In isoform A." evidence="13 14 15 16 17">
    <location>
        <begin position="1"/>
        <end position="183"/>
    </location>
</feature>
<feature type="splice variant" id="VSP_004965" description="In isoform A." evidence="13 14 15 16 17">
    <original>EDSNTPKSYRYHPGLWSGKKWSCCKGLSRTTFGCRAAAHWREANNNPS</original>
    <variation>MIPCVSLAETSVIGNMKERVKEMKVFGCRLNFWNHIGHSLTSSKTKEG</variation>
    <location>
        <begin position="184"/>
        <end position="231"/>
    </location>
</feature>
<feature type="sequence conflict" description="In Ref. 1; AAA28912." evidence="18" ref="1">
    <original>S</original>
    <variation>A</variation>
    <location>
        <position position="243"/>
    </location>
</feature>
<feature type="sequence conflict" description="In Ref. 1; AAA28912 and 2; BAA24063/BAA24064." evidence="18" ref="1 2">
    <original>T</original>
    <variation>N</variation>
    <location>
        <position position="317"/>
    </location>
</feature>
<feature type="sequence conflict" description="In Ref. 1; AAA28912." evidence="18" ref="1">
    <original>PF</original>
    <variation>LG</variation>
    <location>
        <begin position="352"/>
        <end position="353"/>
    </location>
</feature>
<feature type="sequence conflict" description="In Ref. 1; AAA28912." evidence="18" ref="1">
    <original>L</original>
    <variation>VG</variation>
    <location>
        <position position="363"/>
    </location>
</feature>
<feature type="sequence conflict" description="In Ref. 1; AAA28912." evidence="18" ref="1">
    <original>KPK</original>
    <variation>QAE</variation>
    <location>
        <begin position="398"/>
        <end position="400"/>
    </location>
</feature>
<feature type="sequence conflict" description="In Ref. 1; AAA28912." evidence="18" ref="1">
    <original>D</original>
    <variation>Y</variation>
    <location>
        <position position="414"/>
    </location>
</feature>
<feature type="sequence conflict" description="In Ref. 1; AAA28912." evidence="18" ref="1">
    <original>ME</original>
    <variation>IQ</variation>
    <location>
        <begin position="524"/>
        <end position="525"/>
    </location>
</feature>
<feature type="sequence conflict" description="In Ref. 1; AAA28912 and 7; CAA26170." evidence="18" ref="1 7">
    <original>S</original>
    <variation>T</variation>
    <location>
        <position position="589"/>
    </location>
</feature>
<feature type="sequence conflict" description="In Ref. 7; CAA26170." evidence="18" ref="7">
    <original>S</original>
    <variation>F</variation>
    <location>
        <position position="657"/>
    </location>
</feature>
<feature type="sequence conflict" description="In Ref. 7; CAA26170." evidence="18" ref="7">
    <original>GGTK</original>
    <variation>AEPS</variation>
    <location>
        <begin position="681"/>
        <end position="684"/>
    </location>
</feature>
<keyword id="KW-0025">Alternative splicing</keyword>
<keyword id="KW-0067">ATP-binding</keyword>
<keyword id="KW-0418">Kinase</keyword>
<keyword id="KW-0479">Metal-binding</keyword>
<keyword id="KW-0547">Nucleotide-binding</keyword>
<keyword id="KW-0597">Phosphoprotein</keyword>
<keyword id="KW-0656">Proto-oncogene</keyword>
<keyword id="KW-1185">Reference proteome</keyword>
<keyword id="KW-0727">SH2 domain</keyword>
<keyword id="KW-0728">SH3 domain</keyword>
<keyword id="KW-0808">Transferase</keyword>
<keyword id="KW-0829">Tyrosine-protein kinase</keyword>
<keyword id="KW-0862">Zinc</keyword>
<keyword id="KW-0863">Zinc-finger</keyword>
<proteinExistence type="evidence at transcript level"/>
<evidence type="ECO:0000250" key="1"/>
<evidence type="ECO:0000250" key="2">
    <source>
        <dbReference type="UniProtKB" id="Q06187"/>
    </source>
</evidence>
<evidence type="ECO:0000255" key="3">
    <source>
        <dbReference type="PROSITE-ProRule" id="PRU00145"/>
    </source>
</evidence>
<evidence type="ECO:0000255" key="4">
    <source>
        <dbReference type="PROSITE-ProRule" id="PRU00159"/>
    </source>
</evidence>
<evidence type="ECO:0000255" key="5">
    <source>
        <dbReference type="PROSITE-ProRule" id="PRU00191"/>
    </source>
</evidence>
<evidence type="ECO:0000255" key="6">
    <source>
        <dbReference type="PROSITE-ProRule" id="PRU00192"/>
    </source>
</evidence>
<evidence type="ECO:0000255" key="7">
    <source>
        <dbReference type="PROSITE-ProRule" id="PRU00432"/>
    </source>
</evidence>
<evidence type="ECO:0000255" key="8">
    <source>
        <dbReference type="PROSITE-ProRule" id="PRU10028"/>
    </source>
</evidence>
<evidence type="ECO:0000256" key="9">
    <source>
        <dbReference type="SAM" id="MobiDB-lite"/>
    </source>
</evidence>
<evidence type="ECO:0000269" key="10">
    <source>
    </source>
</evidence>
<evidence type="ECO:0000269" key="11">
    <source>
    </source>
</evidence>
<evidence type="ECO:0000269" key="12">
    <source>
    </source>
</evidence>
<evidence type="ECO:0000303" key="13">
    <source>
    </source>
</evidence>
<evidence type="ECO:0000303" key="14">
    <source>
    </source>
</evidence>
<evidence type="ECO:0000303" key="15">
    <source>
    </source>
</evidence>
<evidence type="ECO:0000303" key="16">
    <source>
    </source>
</evidence>
<evidence type="ECO:0000303" key="17">
    <source ref="6"/>
</evidence>
<evidence type="ECO:0000305" key="18"/>
<evidence type="ECO:0000312" key="19">
    <source>
        <dbReference type="FlyBase" id="FBgn0003502"/>
    </source>
</evidence>